<name>Y1098_SYNE7</name>
<accession>Q31P91</accession>
<feature type="chain" id="PRO_0000388323" description="UPF0754 membrane protein Synpcc7942_1098">
    <location>
        <begin position="1"/>
        <end position="412"/>
    </location>
</feature>
<feature type="transmembrane region" description="Helical" evidence="2">
    <location>
        <begin position="8"/>
        <end position="28"/>
    </location>
</feature>
<feature type="transmembrane region" description="Helical" evidence="2">
    <location>
        <begin position="390"/>
        <end position="410"/>
    </location>
</feature>
<keyword id="KW-0997">Cell inner membrane</keyword>
<keyword id="KW-1003">Cell membrane</keyword>
<keyword id="KW-0472">Membrane</keyword>
<keyword id="KW-1185">Reference proteome</keyword>
<keyword id="KW-0812">Transmembrane</keyword>
<keyword id="KW-1133">Transmembrane helix</keyword>
<protein>
    <recommendedName>
        <fullName>UPF0754 membrane protein Synpcc7942_1098</fullName>
    </recommendedName>
</protein>
<sequence length="412" mass="45839">MDGRTLGLWLLPPVVGGIIGYFTNDLAIRMLFRPYRPVVIGGWQLPFTPGLIPANQGRLARRIADAILGSLLTPDALHDLARRLLELPRLEAAIAWLVSLLLERLREVRDPRSIEVAADVLRDLAGSALPRWLRAIVRQRQGLDAQIDRWFEQQLLSQKLGPLQAQQLGDWLLEGAFPPDQIRRVMLDFLTDDNIRNLDRIVRDRTRGTDWVIANLFGVQSSLQRLRQFLREQPEAGDAVIAELSQRLALRQQLSQALQTFQLTDLPQTTLTDLRLQLRQGLRQWLDQDGLSLLEGALGGLDWTAAARALLDRLRTAVISDEAIAAFSHEVALILDQRLEHELEDLVAAALPILALEDLIIGRVEATPAADLEAAIQGIVRSELQAIVNIGGVLGVLLGCVQSLINVWSLST</sequence>
<dbReference type="EMBL" id="CP000100">
    <property type="protein sequence ID" value="ABB57128.1"/>
    <property type="molecule type" value="Genomic_DNA"/>
</dbReference>
<dbReference type="RefSeq" id="WP_011377862.1">
    <property type="nucleotide sequence ID" value="NZ_JACJTX010000003.1"/>
</dbReference>
<dbReference type="STRING" id="1140.Synpcc7942_1098"/>
<dbReference type="PaxDb" id="1140-Synpcc7942_1098"/>
<dbReference type="KEGG" id="syf:Synpcc7942_1098"/>
<dbReference type="eggNOG" id="COG4399">
    <property type="taxonomic scope" value="Bacteria"/>
</dbReference>
<dbReference type="HOGENOM" id="CLU_042384_0_1_3"/>
<dbReference type="OrthoDB" id="9787430at2"/>
<dbReference type="BioCyc" id="SYNEL:SYNPCC7942_1098-MONOMER"/>
<dbReference type="Proteomes" id="UP000889800">
    <property type="component" value="Chromosome"/>
</dbReference>
<dbReference type="GO" id="GO:0005886">
    <property type="term" value="C:plasma membrane"/>
    <property type="evidence" value="ECO:0007669"/>
    <property type="project" value="UniProtKB-SubCell"/>
</dbReference>
<dbReference type="InterPro" id="IPR007383">
    <property type="entry name" value="DUF445"/>
</dbReference>
<dbReference type="InterPro" id="IPR016991">
    <property type="entry name" value="UCP032178"/>
</dbReference>
<dbReference type="PANTHER" id="PTHR35791">
    <property type="entry name" value="UPF0754 MEMBRANE PROTEIN YHEB"/>
    <property type="match status" value="1"/>
</dbReference>
<dbReference type="PANTHER" id="PTHR35791:SF1">
    <property type="entry name" value="UPF0754 MEMBRANE PROTEIN YHEB"/>
    <property type="match status" value="1"/>
</dbReference>
<dbReference type="Pfam" id="PF04286">
    <property type="entry name" value="DUF445"/>
    <property type="match status" value="1"/>
</dbReference>
<dbReference type="PIRSF" id="PIRSF032178">
    <property type="entry name" value="UCP032178"/>
    <property type="match status" value="1"/>
</dbReference>
<comment type="subcellular location">
    <subcellularLocation>
        <location evidence="1">Cell inner membrane</location>
        <topology evidence="1">Multi-pass membrane protein</topology>
    </subcellularLocation>
</comment>
<comment type="similarity">
    <text evidence="3">Belongs to the UPF0754 family.</text>
</comment>
<organism>
    <name type="scientific">Synechococcus elongatus (strain ATCC 33912 / PCC 7942 / FACHB-805)</name>
    <name type="common">Anacystis nidulans R2</name>
    <dbReference type="NCBI Taxonomy" id="1140"/>
    <lineage>
        <taxon>Bacteria</taxon>
        <taxon>Bacillati</taxon>
        <taxon>Cyanobacteriota</taxon>
        <taxon>Cyanophyceae</taxon>
        <taxon>Synechococcales</taxon>
        <taxon>Synechococcaceae</taxon>
        <taxon>Synechococcus</taxon>
    </lineage>
</organism>
<reference key="1">
    <citation type="submission" date="2005-08" db="EMBL/GenBank/DDBJ databases">
        <title>Complete sequence of chromosome 1 of Synechococcus elongatus PCC 7942.</title>
        <authorList>
            <consortium name="US DOE Joint Genome Institute"/>
            <person name="Copeland A."/>
            <person name="Lucas S."/>
            <person name="Lapidus A."/>
            <person name="Barry K."/>
            <person name="Detter J.C."/>
            <person name="Glavina T."/>
            <person name="Hammon N."/>
            <person name="Israni S."/>
            <person name="Pitluck S."/>
            <person name="Schmutz J."/>
            <person name="Larimer F."/>
            <person name="Land M."/>
            <person name="Kyrpides N."/>
            <person name="Lykidis A."/>
            <person name="Golden S."/>
            <person name="Richardson P."/>
        </authorList>
    </citation>
    <scope>NUCLEOTIDE SEQUENCE [LARGE SCALE GENOMIC DNA]</scope>
    <source>
        <strain>ATCC 33912 / PCC 7942 / FACHB-805</strain>
    </source>
</reference>
<gene>
    <name type="ordered locus">Synpcc7942_1098</name>
</gene>
<evidence type="ECO:0000250" key="1"/>
<evidence type="ECO:0000255" key="2"/>
<evidence type="ECO:0000305" key="3"/>
<proteinExistence type="inferred from homology"/>